<proteinExistence type="inferred from homology"/>
<feature type="chain" id="PRO_0000365327" description="tRNA (cytidine(56)-2'-O)-methyltransferase">
    <location>
        <begin position="1"/>
        <end position="338"/>
    </location>
</feature>
<feature type="domain" description="HD" evidence="2">
    <location>
        <begin position="188"/>
        <end position="295"/>
    </location>
</feature>
<feature type="binding site" evidence="1">
    <location>
        <position position="79"/>
    </location>
    <ligand>
        <name>S-adenosyl-L-methionine</name>
        <dbReference type="ChEBI" id="CHEBI:59789"/>
    </ligand>
</feature>
<feature type="binding site" evidence="1">
    <location>
        <begin position="105"/>
        <end position="109"/>
    </location>
    <ligand>
        <name>S-adenosyl-L-methionine</name>
        <dbReference type="ChEBI" id="CHEBI:59789"/>
    </ligand>
</feature>
<dbReference type="EC" id="2.1.1.206"/>
<dbReference type="EMBL" id="BA000011">
    <property type="protein sequence ID" value="BAB60239.1"/>
    <property type="molecule type" value="Genomic_DNA"/>
</dbReference>
<dbReference type="RefSeq" id="WP_010917329.1">
    <property type="nucleotide sequence ID" value="NC_002689.2"/>
</dbReference>
<dbReference type="SMR" id="Q979R3"/>
<dbReference type="STRING" id="273116.gene:9381894"/>
<dbReference type="PaxDb" id="273116-14325335"/>
<dbReference type="DNASU" id="1441211"/>
<dbReference type="GeneID" id="1441211"/>
<dbReference type="KEGG" id="tvo:TVG1129508"/>
<dbReference type="eggNOG" id="arCOG01857">
    <property type="taxonomic scope" value="Archaea"/>
</dbReference>
<dbReference type="HOGENOM" id="CLU_817897_0_0_2"/>
<dbReference type="OrthoDB" id="14397at2157"/>
<dbReference type="PhylomeDB" id="Q979R3"/>
<dbReference type="Proteomes" id="UP000001017">
    <property type="component" value="Chromosome"/>
</dbReference>
<dbReference type="GO" id="GO:0005737">
    <property type="term" value="C:cytoplasm"/>
    <property type="evidence" value="ECO:0007669"/>
    <property type="project" value="UniProtKB-SubCell"/>
</dbReference>
<dbReference type="GO" id="GO:0106059">
    <property type="term" value="F:tRNA (cytidine(56)-2'-O)-methyltransferase activity"/>
    <property type="evidence" value="ECO:0007669"/>
    <property type="project" value="UniProtKB-EC"/>
</dbReference>
<dbReference type="GO" id="GO:0002128">
    <property type="term" value="P:tRNA nucleoside ribose methylation"/>
    <property type="evidence" value="ECO:0007669"/>
    <property type="project" value="UniProtKB-UniRule"/>
</dbReference>
<dbReference type="CDD" id="cd18083">
    <property type="entry name" value="aTrm56-like"/>
    <property type="match status" value="1"/>
</dbReference>
<dbReference type="CDD" id="cd00077">
    <property type="entry name" value="HDc"/>
    <property type="match status" value="1"/>
</dbReference>
<dbReference type="Gene3D" id="3.40.1280.10">
    <property type="match status" value="1"/>
</dbReference>
<dbReference type="Gene3D" id="1.10.3210.10">
    <property type="entry name" value="Hypothetical protein af1432"/>
    <property type="match status" value="1"/>
</dbReference>
<dbReference type="HAMAP" id="MF_00077">
    <property type="entry name" value="tRNA_methyltr_aTrm56"/>
    <property type="match status" value="1"/>
</dbReference>
<dbReference type="InterPro" id="IPR029028">
    <property type="entry name" value="Alpha/beta_knot_MTases"/>
</dbReference>
<dbReference type="InterPro" id="IPR003607">
    <property type="entry name" value="HD/PDEase_dom"/>
</dbReference>
<dbReference type="InterPro" id="IPR006674">
    <property type="entry name" value="HD_domain"/>
</dbReference>
<dbReference type="InterPro" id="IPR006675">
    <property type="entry name" value="HDIG_dom"/>
</dbReference>
<dbReference type="InterPro" id="IPR029026">
    <property type="entry name" value="tRNA_m1G_MTases_N"/>
</dbReference>
<dbReference type="InterPro" id="IPR002845">
    <property type="entry name" value="tRNA_mtfrase_aTrm56"/>
</dbReference>
<dbReference type="NCBIfam" id="TIGR00277">
    <property type="entry name" value="HDIG"/>
    <property type="match status" value="1"/>
</dbReference>
<dbReference type="NCBIfam" id="NF009343">
    <property type="entry name" value="PRK12703.1"/>
    <property type="match status" value="1"/>
</dbReference>
<dbReference type="PANTHER" id="PTHR42197">
    <property type="entry name" value="TRNA (CYTIDINE(56)-2'-O)-METHYLTRANSFERASE"/>
    <property type="match status" value="1"/>
</dbReference>
<dbReference type="PANTHER" id="PTHR42197:SF1">
    <property type="entry name" value="TRNA (CYTIDINE(56)-2'-O)-METHYLTRANSFERASE"/>
    <property type="match status" value="1"/>
</dbReference>
<dbReference type="Pfam" id="PF01966">
    <property type="entry name" value="HD"/>
    <property type="match status" value="1"/>
</dbReference>
<dbReference type="Pfam" id="PF01994">
    <property type="entry name" value="Trm56"/>
    <property type="match status" value="1"/>
</dbReference>
<dbReference type="SMART" id="SM00471">
    <property type="entry name" value="HDc"/>
    <property type="match status" value="1"/>
</dbReference>
<dbReference type="SUPFAM" id="SSF75217">
    <property type="entry name" value="alpha/beta knot"/>
    <property type="match status" value="1"/>
</dbReference>
<dbReference type="SUPFAM" id="SSF109604">
    <property type="entry name" value="HD-domain/PDEase-like"/>
    <property type="match status" value="1"/>
</dbReference>
<dbReference type="PROSITE" id="PS51831">
    <property type="entry name" value="HD"/>
    <property type="match status" value="1"/>
</dbReference>
<name>TRM56_THEVO</name>
<protein>
    <recommendedName>
        <fullName>tRNA (cytidine(56)-2'-O)-methyltransferase</fullName>
        <ecNumber>2.1.1.206</ecNumber>
    </recommendedName>
    <alternativeName>
        <fullName>tRNA ribose 2'-O-methyltransferase aTrm56</fullName>
    </alternativeName>
</protein>
<comment type="function">
    <text evidence="1">Specifically catalyzes the AdoMet-dependent 2'-O-ribose methylation of cytidine at position 56 in tRNAs.</text>
</comment>
<comment type="catalytic activity">
    <reaction>
        <text>cytidine(56) in tRNA + S-adenosyl-L-methionine = 2'-O-methylcytidine(56) in tRNA + S-adenosyl-L-homocysteine + H(+)</text>
        <dbReference type="Rhea" id="RHEA:42968"/>
        <dbReference type="Rhea" id="RHEA-COMP:10308"/>
        <dbReference type="Rhea" id="RHEA-COMP:10309"/>
        <dbReference type="ChEBI" id="CHEBI:15378"/>
        <dbReference type="ChEBI" id="CHEBI:57856"/>
        <dbReference type="ChEBI" id="CHEBI:59789"/>
        <dbReference type="ChEBI" id="CHEBI:74495"/>
        <dbReference type="ChEBI" id="CHEBI:82748"/>
        <dbReference type="EC" id="2.1.1.206"/>
    </reaction>
</comment>
<comment type="subunit">
    <text evidence="1">Homodimer.</text>
</comment>
<comment type="subcellular location">
    <subcellularLocation>
        <location evidence="3">Cytoplasm</location>
    </subcellularLocation>
</comment>
<comment type="similarity">
    <text evidence="3">Belongs to the aTrm56 family.</text>
</comment>
<gene>
    <name type="ordered locus">TV1097</name>
    <name type="ORF">TVG1129508</name>
</gene>
<sequence length="338" mass="38017">MIAVLRINHRPFRDKRITTHVALTARAFGASSILVDEKDETLEQTINKVVENFGGNFFIKSGVDWKREFRNFKGIRVHLTMYGRPLEDVVKEIRESKKDVMILVGSEKVPFEAYEIADYNVSVTNQPISEVSALAIFLDRFYDGEELNWRFTGKINVYPSERGKKVKIIPDEQGCLDLLYKYGASDYLINHVKSVKELAVAIAKKTNADINLVTAGALLHDIGRTQVQGITHAVVGADILRREGIDDRVVSIVEKHIGAGIQSEEAVKLGLPPDNYVPETIEEMIVAHADNLFAGDKRLKLQQVVDNYRKKGLEDAAERIAKLHKFLSTVIGQDMDEI</sequence>
<evidence type="ECO:0000250" key="1"/>
<evidence type="ECO:0000255" key="2">
    <source>
        <dbReference type="PROSITE-ProRule" id="PRU01175"/>
    </source>
</evidence>
<evidence type="ECO:0000305" key="3"/>
<organism>
    <name type="scientific">Thermoplasma volcanium (strain ATCC 51530 / DSM 4299 / JCM 9571 / NBRC 15438 / GSS1)</name>
    <dbReference type="NCBI Taxonomy" id="273116"/>
    <lineage>
        <taxon>Archaea</taxon>
        <taxon>Methanobacteriati</taxon>
        <taxon>Thermoplasmatota</taxon>
        <taxon>Thermoplasmata</taxon>
        <taxon>Thermoplasmatales</taxon>
        <taxon>Thermoplasmataceae</taxon>
        <taxon>Thermoplasma</taxon>
    </lineage>
</organism>
<keyword id="KW-0963">Cytoplasm</keyword>
<keyword id="KW-0489">Methyltransferase</keyword>
<keyword id="KW-0949">S-adenosyl-L-methionine</keyword>
<keyword id="KW-0808">Transferase</keyword>
<keyword id="KW-0819">tRNA processing</keyword>
<accession>Q979R3</accession>
<reference key="1">
    <citation type="journal article" date="2000" name="Proc. Natl. Acad. Sci. U.S.A.">
        <title>Archaeal adaptation to higher temperatures revealed by genomic sequence of Thermoplasma volcanium.</title>
        <authorList>
            <person name="Kawashima T."/>
            <person name="Amano N."/>
            <person name="Koike H."/>
            <person name="Makino S."/>
            <person name="Higuchi S."/>
            <person name="Kawashima-Ohya Y."/>
            <person name="Watanabe K."/>
            <person name="Yamazaki M."/>
            <person name="Kanehori K."/>
            <person name="Kawamoto T."/>
            <person name="Nunoshiba T."/>
            <person name="Yamamoto Y."/>
            <person name="Aramaki H."/>
            <person name="Makino K."/>
            <person name="Suzuki M."/>
        </authorList>
    </citation>
    <scope>NUCLEOTIDE SEQUENCE [LARGE SCALE GENOMIC DNA]</scope>
    <source>
        <strain>ATCC 51530 / DSM 4299 / JCM 9571 / NBRC 15438 / GSS1</strain>
    </source>
</reference>